<protein>
    <recommendedName>
        <fullName>Retinol dehydrogenase 10-A</fullName>
        <ecNumber>1.1.1.300</ecNumber>
    </recommendedName>
</protein>
<name>RD10A_DANRE</name>
<evidence type="ECO:0000250" key="1"/>
<evidence type="ECO:0000255" key="2"/>
<evidence type="ECO:0000255" key="3">
    <source>
        <dbReference type="PROSITE-ProRule" id="PRU10001"/>
    </source>
</evidence>
<evidence type="ECO:0000305" key="4"/>
<comment type="function">
    <text evidence="1">Retinol dehydrogenase with a clear preference for NADP. Converts all-trans-retinol to all-trans-retinal. Has no detectable activity towards 11-cis-retinol, 9-cis-retinol and 13-cis-retinol (By similarity).</text>
</comment>
<comment type="catalytic activity">
    <reaction>
        <text>all-trans-retinol + NADP(+) = all-trans-retinal + NADPH + H(+)</text>
        <dbReference type="Rhea" id="RHEA:25033"/>
        <dbReference type="ChEBI" id="CHEBI:15378"/>
        <dbReference type="ChEBI" id="CHEBI:17336"/>
        <dbReference type="ChEBI" id="CHEBI:17898"/>
        <dbReference type="ChEBI" id="CHEBI:57783"/>
        <dbReference type="ChEBI" id="CHEBI:58349"/>
        <dbReference type="EC" id="1.1.1.300"/>
    </reaction>
</comment>
<comment type="pathway">
    <text>Cofactor metabolism; retinol metabolism.</text>
</comment>
<comment type="subcellular location">
    <subcellularLocation>
        <location evidence="4">Microsome membrane</location>
        <topology evidence="4">Single-pass membrane protein</topology>
    </subcellularLocation>
    <subcellularLocation>
        <location evidence="4">Endoplasmic reticulum membrane</location>
        <topology evidence="4">Single-pass membrane protein</topology>
    </subcellularLocation>
</comment>
<comment type="similarity">
    <text evidence="4">Belongs to the short-chain dehydrogenases/reductases (SDR) family.</text>
</comment>
<organism>
    <name type="scientific">Danio rerio</name>
    <name type="common">Zebrafish</name>
    <name type="synonym">Brachydanio rerio</name>
    <dbReference type="NCBI Taxonomy" id="7955"/>
    <lineage>
        <taxon>Eukaryota</taxon>
        <taxon>Metazoa</taxon>
        <taxon>Chordata</taxon>
        <taxon>Craniata</taxon>
        <taxon>Vertebrata</taxon>
        <taxon>Euteleostomi</taxon>
        <taxon>Actinopterygii</taxon>
        <taxon>Neopterygii</taxon>
        <taxon>Teleostei</taxon>
        <taxon>Ostariophysi</taxon>
        <taxon>Cypriniformes</taxon>
        <taxon>Danionidae</taxon>
        <taxon>Danioninae</taxon>
        <taxon>Danio</taxon>
    </lineage>
</organism>
<sequence>MNIFVEFFLVMLKVCWAIVMAGFKWLIRPKEKSVAGQVCVITGAGGGLGRLFAKEFARRRATLVLWDINSHSNEETAEMVRQIYREQDNPMSKEGAVGGVEEVPPFQPQVYTYVLDVGKRESVYSTAEKVRREVGEVDLLINNAGVVSGHHLLECPDELIERTMVVNCHAHFWTTKAFLPKMLEMNHGHIVTVASSLGLFSTAGVEDYCASKFGAIGFHESLSHEIQASEKDGIKMTLVCPYLVDTGMFRGCRIRKEIEPFLPPLRPEFCVKQAMRAILTDQPMICTPRIVYMVNFMKSILPFEAIVCMYRFLGADKCMYPFLAQRKEAMNNNEAKNGI</sequence>
<proteinExistence type="evidence at transcript level"/>
<keyword id="KW-0256">Endoplasmic reticulum</keyword>
<keyword id="KW-0472">Membrane</keyword>
<keyword id="KW-0492">Microsome</keyword>
<keyword id="KW-0521">NADP</keyword>
<keyword id="KW-0560">Oxidoreductase</keyword>
<keyword id="KW-1185">Reference proteome</keyword>
<keyword id="KW-0735">Signal-anchor</keyword>
<keyword id="KW-0812">Transmembrane</keyword>
<keyword id="KW-1133">Transmembrane helix</keyword>
<gene>
    <name type="primary">rdh10a</name>
    <name type="ORF">zgc:158459</name>
</gene>
<reference key="1">
    <citation type="submission" date="2006-12" db="EMBL/GenBank/DDBJ databases">
        <authorList>
            <consortium name="NIH - Zebrafish Gene Collection (ZGC) project"/>
        </authorList>
    </citation>
    <scope>NUCLEOTIDE SEQUENCE [LARGE SCALE MRNA]</scope>
    <source>
        <tissue>Embryo</tissue>
    </source>
</reference>
<dbReference type="EC" id="1.1.1.300"/>
<dbReference type="EMBL" id="BC129239">
    <property type="protein sequence ID" value="AAI29240.1"/>
    <property type="molecule type" value="mRNA"/>
</dbReference>
<dbReference type="RefSeq" id="NP_001074052.1">
    <property type="nucleotide sequence ID" value="NM_001080583.1"/>
</dbReference>
<dbReference type="SMR" id="A1L1W4"/>
<dbReference type="FunCoup" id="A1L1W4">
    <property type="interactions" value="65"/>
</dbReference>
<dbReference type="STRING" id="7955.ENSDARP00000066702"/>
<dbReference type="PaxDb" id="7955-ENSDARP00000066702"/>
<dbReference type="Ensembl" id="ENSDART00000191533">
    <property type="protein sequence ID" value="ENSDARP00000144743"/>
    <property type="gene ID" value="ENSDARG00000113421"/>
</dbReference>
<dbReference type="GeneID" id="562840"/>
<dbReference type="KEGG" id="dre:562840"/>
<dbReference type="AGR" id="ZFIN:ZDB-GENE-070112-2242"/>
<dbReference type="CTD" id="562840"/>
<dbReference type="ZFIN" id="ZDB-GENE-070112-2242">
    <property type="gene designation" value="rdh10a"/>
</dbReference>
<dbReference type="eggNOG" id="KOG1201">
    <property type="taxonomic scope" value="Eukaryota"/>
</dbReference>
<dbReference type="InParanoid" id="A1L1W4"/>
<dbReference type="OMA" id="HICAPRV"/>
<dbReference type="OrthoDB" id="5840532at2759"/>
<dbReference type="PhylomeDB" id="A1L1W4"/>
<dbReference type="Reactome" id="R-DRE-2453902">
    <property type="pathway name" value="The canonical retinoid cycle in rods (twilight vision)"/>
</dbReference>
<dbReference type="Reactome" id="R-DRE-5365859">
    <property type="pathway name" value="RA biosynthesis pathway"/>
</dbReference>
<dbReference type="UniPathway" id="UPA00912"/>
<dbReference type="PRO" id="PR:A1L1W4"/>
<dbReference type="Proteomes" id="UP000000437">
    <property type="component" value="Alternate scaffold 24"/>
</dbReference>
<dbReference type="Proteomes" id="UP000000437">
    <property type="component" value="Chromosome 24"/>
</dbReference>
<dbReference type="Bgee" id="ENSDARG00000113421">
    <property type="expression patterns" value="Expressed in multicellular organism and 19 other cell types or tissues"/>
</dbReference>
<dbReference type="GO" id="GO:0005789">
    <property type="term" value="C:endoplasmic reticulum membrane"/>
    <property type="evidence" value="ECO:0007669"/>
    <property type="project" value="UniProtKB-SubCell"/>
</dbReference>
<dbReference type="GO" id="GO:0005811">
    <property type="term" value="C:lipid droplet"/>
    <property type="evidence" value="ECO:0000318"/>
    <property type="project" value="GO_Central"/>
</dbReference>
<dbReference type="GO" id="GO:0052650">
    <property type="term" value="F:all-trans-retinol dehydrogenase (NADP+) activity"/>
    <property type="evidence" value="ECO:0007669"/>
    <property type="project" value="UniProtKB-EC"/>
</dbReference>
<dbReference type="GO" id="GO:0016616">
    <property type="term" value="F:oxidoreductase activity, acting on the CH-OH group of donors, NAD or NADP as acceptor"/>
    <property type="evidence" value="ECO:0000318"/>
    <property type="project" value="GO_Central"/>
</dbReference>
<dbReference type="GO" id="GO:0002138">
    <property type="term" value="P:retinoic acid biosynthetic process"/>
    <property type="evidence" value="ECO:0000315"/>
    <property type="project" value="ZFIN"/>
</dbReference>
<dbReference type="CDD" id="cd05339">
    <property type="entry name" value="17beta-HSDXI-like_SDR_c"/>
    <property type="match status" value="1"/>
</dbReference>
<dbReference type="FunFam" id="3.40.50.720:FF:000177">
    <property type="entry name" value="Retinol dehydrogenase 10"/>
    <property type="match status" value="1"/>
</dbReference>
<dbReference type="Gene3D" id="3.40.50.720">
    <property type="entry name" value="NAD(P)-binding Rossmann-like Domain"/>
    <property type="match status" value="1"/>
</dbReference>
<dbReference type="InterPro" id="IPR036291">
    <property type="entry name" value="NAD(P)-bd_dom_sf"/>
</dbReference>
<dbReference type="InterPro" id="IPR020904">
    <property type="entry name" value="Sc_DH/Rdtase_CS"/>
</dbReference>
<dbReference type="InterPro" id="IPR002347">
    <property type="entry name" value="SDR_fam"/>
</dbReference>
<dbReference type="PANTHER" id="PTHR24322">
    <property type="entry name" value="PKSB"/>
    <property type="match status" value="1"/>
</dbReference>
<dbReference type="PANTHER" id="PTHR24322:SF745">
    <property type="entry name" value="RETINOL DEHYDROGENASE 10-A-RELATED"/>
    <property type="match status" value="1"/>
</dbReference>
<dbReference type="Pfam" id="PF00106">
    <property type="entry name" value="adh_short"/>
    <property type="match status" value="1"/>
</dbReference>
<dbReference type="PRINTS" id="PR00081">
    <property type="entry name" value="GDHRDH"/>
</dbReference>
<dbReference type="PRINTS" id="PR00080">
    <property type="entry name" value="SDRFAMILY"/>
</dbReference>
<dbReference type="SUPFAM" id="SSF51735">
    <property type="entry name" value="NAD(P)-binding Rossmann-fold domains"/>
    <property type="match status" value="1"/>
</dbReference>
<dbReference type="PROSITE" id="PS00061">
    <property type="entry name" value="ADH_SHORT"/>
    <property type="match status" value="1"/>
</dbReference>
<accession>A1L1W4</accession>
<feature type="chain" id="PRO_0000307686" description="Retinol dehydrogenase 10-A">
    <location>
        <begin position="1"/>
        <end position="339"/>
    </location>
</feature>
<feature type="transmembrane region" description="Helical; Signal-anchor" evidence="2">
    <location>
        <begin position="3"/>
        <end position="23"/>
    </location>
</feature>
<feature type="active site" description="Proton acceptor" evidence="3">
    <location>
        <position position="208"/>
    </location>
</feature>
<feature type="binding site" evidence="1">
    <location>
        <begin position="40"/>
        <end position="64"/>
    </location>
    <ligand>
        <name>NADP(+)</name>
        <dbReference type="ChEBI" id="CHEBI:58349"/>
    </ligand>
</feature>
<feature type="binding site" evidence="1">
    <location>
        <position position="195"/>
    </location>
    <ligand>
        <name>substrate</name>
    </ligand>
</feature>